<reference key="1">
    <citation type="submission" date="2007-10" db="EMBL/GenBank/DDBJ databases">
        <title>Complete sequence of Desulfococcus oleovorans Hxd3.</title>
        <authorList>
            <consortium name="US DOE Joint Genome Institute"/>
            <person name="Copeland A."/>
            <person name="Lucas S."/>
            <person name="Lapidus A."/>
            <person name="Barry K."/>
            <person name="Glavina del Rio T."/>
            <person name="Dalin E."/>
            <person name="Tice H."/>
            <person name="Pitluck S."/>
            <person name="Kiss H."/>
            <person name="Brettin T."/>
            <person name="Bruce D."/>
            <person name="Detter J.C."/>
            <person name="Han C."/>
            <person name="Schmutz J."/>
            <person name="Larimer F."/>
            <person name="Land M."/>
            <person name="Hauser L."/>
            <person name="Kyrpides N."/>
            <person name="Kim E."/>
            <person name="Wawrik B."/>
            <person name="Richardson P."/>
        </authorList>
    </citation>
    <scope>NUCLEOTIDE SEQUENCE [LARGE SCALE GENOMIC DNA]</scope>
    <source>
        <strain>DSM 6200 / JCM 39069 / Hxd3</strain>
    </source>
</reference>
<accession>A8ZUR6</accession>
<keyword id="KW-0030">Aminoacyl-tRNA synthetase</keyword>
<keyword id="KW-0067">ATP-binding</keyword>
<keyword id="KW-0963">Cytoplasm</keyword>
<keyword id="KW-0436">Ligase</keyword>
<keyword id="KW-0547">Nucleotide-binding</keyword>
<keyword id="KW-0648">Protein biosynthesis</keyword>
<keyword id="KW-1185">Reference proteome</keyword>
<feature type="chain" id="PRO_1000095549" description="Histidine--tRNA ligase">
    <location>
        <begin position="1"/>
        <end position="423"/>
    </location>
</feature>
<proteinExistence type="inferred from homology"/>
<protein>
    <recommendedName>
        <fullName evidence="1">Histidine--tRNA ligase</fullName>
        <ecNumber evidence="1">6.1.1.21</ecNumber>
    </recommendedName>
    <alternativeName>
        <fullName evidence="1">Histidyl-tRNA synthetase</fullName>
        <shortName evidence="1">HisRS</shortName>
    </alternativeName>
</protein>
<dbReference type="EC" id="6.1.1.21" evidence="1"/>
<dbReference type="EMBL" id="CP000859">
    <property type="protein sequence ID" value="ABW66479.1"/>
    <property type="molecule type" value="Genomic_DNA"/>
</dbReference>
<dbReference type="RefSeq" id="WP_012174098.1">
    <property type="nucleotide sequence ID" value="NC_009943.1"/>
</dbReference>
<dbReference type="SMR" id="A8ZUR6"/>
<dbReference type="STRING" id="96561.Dole_0669"/>
<dbReference type="KEGG" id="dol:Dole_0669"/>
<dbReference type="eggNOG" id="COG0124">
    <property type="taxonomic scope" value="Bacteria"/>
</dbReference>
<dbReference type="HOGENOM" id="CLU_025113_1_1_7"/>
<dbReference type="OrthoDB" id="9800814at2"/>
<dbReference type="Proteomes" id="UP000008561">
    <property type="component" value="Chromosome"/>
</dbReference>
<dbReference type="GO" id="GO:0005737">
    <property type="term" value="C:cytoplasm"/>
    <property type="evidence" value="ECO:0007669"/>
    <property type="project" value="UniProtKB-SubCell"/>
</dbReference>
<dbReference type="GO" id="GO:0005524">
    <property type="term" value="F:ATP binding"/>
    <property type="evidence" value="ECO:0007669"/>
    <property type="project" value="UniProtKB-UniRule"/>
</dbReference>
<dbReference type="GO" id="GO:0004821">
    <property type="term" value="F:histidine-tRNA ligase activity"/>
    <property type="evidence" value="ECO:0007669"/>
    <property type="project" value="UniProtKB-UniRule"/>
</dbReference>
<dbReference type="GO" id="GO:0006427">
    <property type="term" value="P:histidyl-tRNA aminoacylation"/>
    <property type="evidence" value="ECO:0007669"/>
    <property type="project" value="UniProtKB-UniRule"/>
</dbReference>
<dbReference type="CDD" id="cd00773">
    <property type="entry name" value="HisRS-like_core"/>
    <property type="match status" value="1"/>
</dbReference>
<dbReference type="Gene3D" id="3.40.50.800">
    <property type="entry name" value="Anticodon-binding domain"/>
    <property type="match status" value="1"/>
</dbReference>
<dbReference type="Gene3D" id="3.30.930.10">
    <property type="entry name" value="Bira Bifunctional Protein, Domain 2"/>
    <property type="match status" value="1"/>
</dbReference>
<dbReference type="HAMAP" id="MF_00127">
    <property type="entry name" value="His_tRNA_synth"/>
    <property type="match status" value="1"/>
</dbReference>
<dbReference type="InterPro" id="IPR006195">
    <property type="entry name" value="aa-tRNA-synth_II"/>
</dbReference>
<dbReference type="InterPro" id="IPR045864">
    <property type="entry name" value="aa-tRNA-synth_II/BPL/LPL"/>
</dbReference>
<dbReference type="InterPro" id="IPR004154">
    <property type="entry name" value="Anticodon-bd"/>
</dbReference>
<dbReference type="InterPro" id="IPR036621">
    <property type="entry name" value="Anticodon-bd_dom_sf"/>
</dbReference>
<dbReference type="InterPro" id="IPR015807">
    <property type="entry name" value="His-tRNA-ligase"/>
</dbReference>
<dbReference type="InterPro" id="IPR041715">
    <property type="entry name" value="HisRS-like_core"/>
</dbReference>
<dbReference type="InterPro" id="IPR004516">
    <property type="entry name" value="HisRS/HisZ"/>
</dbReference>
<dbReference type="NCBIfam" id="TIGR00442">
    <property type="entry name" value="hisS"/>
    <property type="match status" value="1"/>
</dbReference>
<dbReference type="PANTHER" id="PTHR43707:SF1">
    <property type="entry name" value="HISTIDINE--TRNA LIGASE, MITOCHONDRIAL-RELATED"/>
    <property type="match status" value="1"/>
</dbReference>
<dbReference type="PANTHER" id="PTHR43707">
    <property type="entry name" value="HISTIDYL-TRNA SYNTHETASE"/>
    <property type="match status" value="1"/>
</dbReference>
<dbReference type="Pfam" id="PF03129">
    <property type="entry name" value="HGTP_anticodon"/>
    <property type="match status" value="1"/>
</dbReference>
<dbReference type="Pfam" id="PF13393">
    <property type="entry name" value="tRNA-synt_His"/>
    <property type="match status" value="1"/>
</dbReference>
<dbReference type="PIRSF" id="PIRSF001549">
    <property type="entry name" value="His-tRNA_synth"/>
    <property type="match status" value="1"/>
</dbReference>
<dbReference type="SUPFAM" id="SSF52954">
    <property type="entry name" value="Class II aaRS ABD-related"/>
    <property type="match status" value="1"/>
</dbReference>
<dbReference type="SUPFAM" id="SSF55681">
    <property type="entry name" value="Class II aaRS and biotin synthetases"/>
    <property type="match status" value="1"/>
</dbReference>
<dbReference type="PROSITE" id="PS50862">
    <property type="entry name" value="AA_TRNA_LIGASE_II"/>
    <property type="match status" value="1"/>
</dbReference>
<organism>
    <name type="scientific">Desulfosudis oleivorans (strain DSM 6200 / JCM 39069 / Hxd3)</name>
    <name type="common">Desulfococcus oleovorans</name>
    <dbReference type="NCBI Taxonomy" id="96561"/>
    <lineage>
        <taxon>Bacteria</taxon>
        <taxon>Pseudomonadati</taxon>
        <taxon>Thermodesulfobacteriota</taxon>
        <taxon>Desulfobacteria</taxon>
        <taxon>Desulfobacterales</taxon>
        <taxon>Desulfosudaceae</taxon>
        <taxon>Desulfosudis</taxon>
    </lineage>
</organism>
<evidence type="ECO:0000255" key="1">
    <source>
        <dbReference type="HAMAP-Rule" id="MF_00127"/>
    </source>
</evidence>
<sequence>MLQLIKGFKDILPGEADRWRRIETLAAVTFGAFGFSEIRPPVMERTELFKRSIGEDTDIVEKEMYTFEDRGGDLVTLRPEATASVVRAYIQHKLYADTPVAKLYTIGPMFRRERPQKGRYRQFHQINAEAFGVAAPYMDAQLIFMLMILFSALGLKDTRVHINSLGCAQCRPAFKQRLLSFLEGRKADLCEDCTRRIDRNPLRVLDCKVDRCRHVSAEAPQITDFLCPGCAAHFDEVTGLLTDLGVGFDIDKRLVRGLDYYTRTTFEVQTDRLGAQSAIAGGGRYDDLVKLLGGPDQPAVGFAVGLERLVELVAMEETVSDVAHLRLFIAALGERARRRAFGWMCELNRRGFDVEMSLEERGLKSQMKTADKWNASHVLIVGDAEMETGSLILRNMKTKAQQEIPLGDVPGALITMMDNRQEN</sequence>
<name>SYH_DESOH</name>
<gene>
    <name evidence="1" type="primary">hisS</name>
    <name type="ordered locus">Dole_0669</name>
</gene>
<comment type="catalytic activity">
    <reaction evidence="1">
        <text>tRNA(His) + L-histidine + ATP = L-histidyl-tRNA(His) + AMP + diphosphate + H(+)</text>
        <dbReference type="Rhea" id="RHEA:17313"/>
        <dbReference type="Rhea" id="RHEA-COMP:9665"/>
        <dbReference type="Rhea" id="RHEA-COMP:9689"/>
        <dbReference type="ChEBI" id="CHEBI:15378"/>
        <dbReference type="ChEBI" id="CHEBI:30616"/>
        <dbReference type="ChEBI" id="CHEBI:33019"/>
        <dbReference type="ChEBI" id="CHEBI:57595"/>
        <dbReference type="ChEBI" id="CHEBI:78442"/>
        <dbReference type="ChEBI" id="CHEBI:78527"/>
        <dbReference type="ChEBI" id="CHEBI:456215"/>
        <dbReference type="EC" id="6.1.1.21"/>
    </reaction>
</comment>
<comment type="subunit">
    <text evidence="1">Homodimer.</text>
</comment>
<comment type="subcellular location">
    <subcellularLocation>
        <location evidence="1">Cytoplasm</location>
    </subcellularLocation>
</comment>
<comment type="similarity">
    <text evidence="1">Belongs to the class-II aminoacyl-tRNA synthetase family.</text>
</comment>